<comment type="function">
    <text evidence="1">Together with LptD, is involved in the assembly of lipopolysaccharide (LPS) at the surface of the outer membrane. Required for the proper assembly of LptD. Binds LPS and may serve as the LPS recognition site at the outer membrane.</text>
</comment>
<comment type="subunit">
    <text evidence="1">Component of the lipopolysaccharide transport and assembly complex. Interacts with LptD.</text>
</comment>
<comment type="subcellular location">
    <subcellularLocation>
        <location evidence="1">Cell outer membrane</location>
        <topology evidence="1">Lipid-anchor</topology>
    </subcellularLocation>
</comment>
<comment type="similarity">
    <text evidence="1">Belongs to the LptE lipoprotein family.</text>
</comment>
<keyword id="KW-0998">Cell outer membrane</keyword>
<keyword id="KW-0449">Lipoprotein</keyword>
<keyword id="KW-0472">Membrane</keyword>
<keyword id="KW-0564">Palmitate</keyword>
<keyword id="KW-0732">Signal</keyword>
<sequence>MRYLVTLLLSLAVLVTAGCGWHLRSTTQVPASMKTMILDSGDPNGPLSRAVRNQLRLNNVNLLDKDTTRKDVPSLRLGTVTISQDTASVFQDGQTAEYQMVMTVNASVLIPGHDIYPISTKVYRSFFDNPQMALAKDNEQAMIVQEMYDKAAEQLIRKLTSVRAADIQATKEEATADNETAAPASTPARVSTTLSN</sequence>
<protein>
    <recommendedName>
        <fullName evidence="1">LPS-assembly lipoprotein LptE</fullName>
    </recommendedName>
</protein>
<feature type="signal peptide" evidence="1">
    <location>
        <begin position="1"/>
        <end position="18"/>
    </location>
</feature>
<feature type="chain" id="PRO_1000138276" description="LPS-assembly lipoprotein LptE">
    <location>
        <begin position="19"/>
        <end position="196"/>
    </location>
</feature>
<feature type="region of interest" description="Disordered" evidence="2">
    <location>
        <begin position="171"/>
        <end position="196"/>
    </location>
</feature>
<feature type="lipid moiety-binding region" description="N-palmitoyl cysteine" evidence="1">
    <location>
        <position position="19"/>
    </location>
</feature>
<feature type="lipid moiety-binding region" description="S-diacylglycerol cysteine" evidence="1">
    <location>
        <position position="19"/>
    </location>
</feature>
<accession>B5QVP8</accession>
<organism>
    <name type="scientific">Salmonella enteritidis PT4 (strain P125109)</name>
    <dbReference type="NCBI Taxonomy" id="550537"/>
    <lineage>
        <taxon>Bacteria</taxon>
        <taxon>Pseudomonadati</taxon>
        <taxon>Pseudomonadota</taxon>
        <taxon>Gammaproteobacteria</taxon>
        <taxon>Enterobacterales</taxon>
        <taxon>Enterobacteriaceae</taxon>
        <taxon>Salmonella</taxon>
    </lineage>
</organism>
<evidence type="ECO:0000255" key="1">
    <source>
        <dbReference type="HAMAP-Rule" id="MF_01186"/>
    </source>
</evidence>
<evidence type="ECO:0000256" key="2">
    <source>
        <dbReference type="SAM" id="MobiDB-lite"/>
    </source>
</evidence>
<proteinExistence type="inferred from homology"/>
<name>LPTE_SALEP</name>
<gene>
    <name evidence="1" type="primary">lptE</name>
    <name type="synonym">rlpB</name>
    <name type="ordered locus">SEN0616</name>
</gene>
<reference key="1">
    <citation type="journal article" date="2008" name="Genome Res.">
        <title>Comparative genome analysis of Salmonella enteritidis PT4 and Salmonella gallinarum 287/91 provides insights into evolutionary and host adaptation pathways.</title>
        <authorList>
            <person name="Thomson N.R."/>
            <person name="Clayton D.J."/>
            <person name="Windhorst D."/>
            <person name="Vernikos G."/>
            <person name="Davidson S."/>
            <person name="Churcher C."/>
            <person name="Quail M.A."/>
            <person name="Stevens M."/>
            <person name="Jones M.A."/>
            <person name="Watson M."/>
            <person name="Barron A."/>
            <person name="Layton A."/>
            <person name="Pickard D."/>
            <person name="Kingsley R.A."/>
            <person name="Bignell A."/>
            <person name="Clark L."/>
            <person name="Harris B."/>
            <person name="Ormond D."/>
            <person name="Abdellah Z."/>
            <person name="Brooks K."/>
            <person name="Cherevach I."/>
            <person name="Chillingworth T."/>
            <person name="Woodward J."/>
            <person name="Norberczak H."/>
            <person name="Lord A."/>
            <person name="Arrowsmith C."/>
            <person name="Jagels K."/>
            <person name="Moule S."/>
            <person name="Mungall K."/>
            <person name="Saunders M."/>
            <person name="Whitehead S."/>
            <person name="Chabalgoity J.A."/>
            <person name="Maskell D."/>
            <person name="Humphreys T."/>
            <person name="Roberts M."/>
            <person name="Barrow P.A."/>
            <person name="Dougan G."/>
            <person name="Parkhill J."/>
        </authorList>
    </citation>
    <scope>NUCLEOTIDE SEQUENCE [LARGE SCALE GENOMIC DNA]</scope>
    <source>
        <strain>P125109</strain>
    </source>
</reference>
<dbReference type="EMBL" id="AM933172">
    <property type="protein sequence ID" value="CAR32204.1"/>
    <property type="molecule type" value="Genomic_DNA"/>
</dbReference>
<dbReference type="RefSeq" id="WP_001269950.1">
    <property type="nucleotide sequence ID" value="NC_011294.1"/>
</dbReference>
<dbReference type="SMR" id="B5QVP8"/>
<dbReference type="KEGG" id="set:SEN0616"/>
<dbReference type="HOGENOM" id="CLU_103309_1_1_6"/>
<dbReference type="Proteomes" id="UP000000613">
    <property type="component" value="Chromosome"/>
</dbReference>
<dbReference type="GO" id="GO:0009279">
    <property type="term" value="C:cell outer membrane"/>
    <property type="evidence" value="ECO:0007669"/>
    <property type="project" value="UniProtKB-SubCell"/>
</dbReference>
<dbReference type="GO" id="GO:1990351">
    <property type="term" value="C:transporter complex"/>
    <property type="evidence" value="ECO:0007669"/>
    <property type="project" value="TreeGrafter"/>
</dbReference>
<dbReference type="GO" id="GO:0001530">
    <property type="term" value="F:lipopolysaccharide binding"/>
    <property type="evidence" value="ECO:0007669"/>
    <property type="project" value="TreeGrafter"/>
</dbReference>
<dbReference type="GO" id="GO:0043165">
    <property type="term" value="P:Gram-negative-bacterium-type cell outer membrane assembly"/>
    <property type="evidence" value="ECO:0007669"/>
    <property type="project" value="UniProtKB-UniRule"/>
</dbReference>
<dbReference type="GO" id="GO:0015920">
    <property type="term" value="P:lipopolysaccharide transport"/>
    <property type="evidence" value="ECO:0007669"/>
    <property type="project" value="TreeGrafter"/>
</dbReference>
<dbReference type="FunFam" id="3.30.160.150:FF:000001">
    <property type="entry name" value="LPS-assembly lipoprotein LptE"/>
    <property type="match status" value="1"/>
</dbReference>
<dbReference type="Gene3D" id="3.30.160.150">
    <property type="entry name" value="Lipoprotein like domain"/>
    <property type="match status" value="1"/>
</dbReference>
<dbReference type="HAMAP" id="MF_01186">
    <property type="entry name" value="LPS_assembly_LptE"/>
    <property type="match status" value="1"/>
</dbReference>
<dbReference type="InterPro" id="IPR007485">
    <property type="entry name" value="LPS_assembly_LptE"/>
</dbReference>
<dbReference type="NCBIfam" id="NF008062">
    <property type="entry name" value="PRK10796.1"/>
    <property type="match status" value="1"/>
</dbReference>
<dbReference type="PANTHER" id="PTHR38098">
    <property type="entry name" value="LPS-ASSEMBLY LIPOPROTEIN LPTE"/>
    <property type="match status" value="1"/>
</dbReference>
<dbReference type="PANTHER" id="PTHR38098:SF1">
    <property type="entry name" value="LPS-ASSEMBLY LIPOPROTEIN LPTE"/>
    <property type="match status" value="1"/>
</dbReference>
<dbReference type="Pfam" id="PF04390">
    <property type="entry name" value="LptE"/>
    <property type="match status" value="1"/>
</dbReference>
<dbReference type="PROSITE" id="PS51257">
    <property type="entry name" value="PROKAR_LIPOPROTEIN"/>
    <property type="match status" value="1"/>
</dbReference>